<proteinExistence type="inferred from homology"/>
<name>LEXA_RHOCA</name>
<keyword id="KW-0068">Autocatalytic cleavage</keyword>
<keyword id="KW-0227">DNA damage</keyword>
<keyword id="KW-0234">DNA repair</keyword>
<keyword id="KW-0235">DNA replication</keyword>
<keyword id="KW-0238">DNA-binding</keyword>
<keyword id="KW-0378">Hydrolase</keyword>
<keyword id="KW-0678">Repressor</keyword>
<keyword id="KW-0742">SOS response</keyword>
<keyword id="KW-0804">Transcription</keyword>
<keyword id="KW-0805">Transcription regulation</keyword>
<gene>
    <name evidence="1" type="primary">lexA</name>
</gene>
<dbReference type="EC" id="3.4.21.88" evidence="1"/>
<dbReference type="EMBL" id="AF308861">
    <property type="protein sequence ID" value="AAQ14546.1"/>
    <property type="molecule type" value="Genomic_DNA"/>
</dbReference>
<dbReference type="SMR" id="P61613"/>
<dbReference type="MEROPS" id="S24.001"/>
<dbReference type="GO" id="GO:0003677">
    <property type="term" value="F:DNA binding"/>
    <property type="evidence" value="ECO:0007669"/>
    <property type="project" value="UniProtKB-UniRule"/>
</dbReference>
<dbReference type="GO" id="GO:0004252">
    <property type="term" value="F:serine-type endopeptidase activity"/>
    <property type="evidence" value="ECO:0007669"/>
    <property type="project" value="UniProtKB-UniRule"/>
</dbReference>
<dbReference type="GO" id="GO:0006281">
    <property type="term" value="P:DNA repair"/>
    <property type="evidence" value="ECO:0007669"/>
    <property type="project" value="UniProtKB-UniRule"/>
</dbReference>
<dbReference type="GO" id="GO:0006260">
    <property type="term" value="P:DNA replication"/>
    <property type="evidence" value="ECO:0007669"/>
    <property type="project" value="UniProtKB-UniRule"/>
</dbReference>
<dbReference type="GO" id="GO:0045892">
    <property type="term" value="P:negative regulation of DNA-templated transcription"/>
    <property type="evidence" value="ECO:0007669"/>
    <property type="project" value="UniProtKB-UniRule"/>
</dbReference>
<dbReference type="GO" id="GO:0006508">
    <property type="term" value="P:proteolysis"/>
    <property type="evidence" value="ECO:0007669"/>
    <property type="project" value="InterPro"/>
</dbReference>
<dbReference type="GO" id="GO:0009432">
    <property type="term" value="P:SOS response"/>
    <property type="evidence" value="ECO:0007669"/>
    <property type="project" value="UniProtKB-UniRule"/>
</dbReference>
<dbReference type="CDD" id="cd06529">
    <property type="entry name" value="S24_LexA-like"/>
    <property type="match status" value="1"/>
</dbReference>
<dbReference type="FunFam" id="2.10.109.10:FF:000001">
    <property type="entry name" value="LexA repressor"/>
    <property type="match status" value="1"/>
</dbReference>
<dbReference type="Gene3D" id="2.10.109.10">
    <property type="entry name" value="Umud Fragment, subunit A"/>
    <property type="match status" value="1"/>
</dbReference>
<dbReference type="Gene3D" id="1.10.10.10">
    <property type="entry name" value="Winged helix-like DNA-binding domain superfamily/Winged helix DNA-binding domain"/>
    <property type="match status" value="1"/>
</dbReference>
<dbReference type="HAMAP" id="MF_00015">
    <property type="entry name" value="LexA"/>
    <property type="match status" value="1"/>
</dbReference>
<dbReference type="InterPro" id="IPR006200">
    <property type="entry name" value="LexA"/>
</dbReference>
<dbReference type="InterPro" id="IPR039418">
    <property type="entry name" value="LexA-like"/>
</dbReference>
<dbReference type="InterPro" id="IPR036286">
    <property type="entry name" value="LexA/Signal_pep-like_sf"/>
</dbReference>
<dbReference type="InterPro" id="IPR006199">
    <property type="entry name" value="LexA_DNA-bd_dom"/>
</dbReference>
<dbReference type="InterPro" id="IPR050077">
    <property type="entry name" value="LexA_repressor"/>
</dbReference>
<dbReference type="InterPro" id="IPR006197">
    <property type="entry name" value="Peptidase_S24_LexA"/>
</dbReference>
<dbReference type="InterPro" id="IPR015927">
    <property type="entry name" value="Peptidase_S24_S26A/B/C"/>
</dbReference>
<dbReference type="InterPro" id="IPR036388">
    <property type="entry name" value="WH-like_DNA-bd_sf"/>
</dbReference>
<dbReference type="InterPro" id="IPR036390">
    <property type="entry name" value="WH_DNA-bd_sf"/>
</dbReference>
<dbReference type="NCBIfam" id="TIGR00498">
    <property type="entry name" value="lexA"/>
    <property type="match status" value="1"/>
</dbReference>
<dbReference type="PANTHER" id="PTHR33516">
    <property type="entry name" value="LEXA REPRESSOR"/>
    <property type="match status" value="1"/>
</dbReference>
<dbReference type="PANTHER" id="PTHR33516:SF2">
    <property type="entry name" value="LEXA REPRESSOR-RELATED"/>
    <property type="match status" value="1"/>
</dbReference>
<dbReference type="Pfam" id="PF01726">
    <property type="entry name" value="LexA_DNA_bind"/>
    <property type="match status" value="1"/>
</dbReference>
<dbReference type="Pfam" id="PF00717">
    <property type="entry name" value="Peptidase_S24"/>
    <property type="match status" value="1"/>
</dbReference>
<dbReference type="PRINTS" id="PR00726">
    <property type="entry name" value="LEXASERPTASE"/>
</dbReference>
<dbReference type="SUPFAM" id="SSF51306">
    <property type="entry name" value="LexA/Signal peptidase"/>
    <property type="match status" value="1"/>
</dbReference>
<dbReference type="SUPFAM" id="SSF46785">
    <property type="entry name" value="Winged helix' DNA-binding domain"/>
    <property type="match status" value="1"/>
</dbReference>
<reference key="1">
    <citation type="submission" date="2000-09" db="EMBL/GenBank/DDBJ databases">
        <title>The lexA gene of Rhodobacter capsulatus J50 strain.</title>
        <authorList>
            <person name="Campoy S."/>
            <person name="Tapias A."/>
            <person name="Mazon G."/>
            <person name="Barbe J."/>
        </authorList>
    </citation>
    <scope>NUCLEOTIDE SEQUENCE [GENOMIC DNA]</scope>
    <source>
        <strain>J50</strain>
    </source>
</reference>
<feature type="chain" id="PRO_0000170077" description="LexA repressor">
    <location>
        <begin position="1"/>
        <end position="238"/>
    </location>
</feature>
<feature type="DNA-binding region" description="H-T-H motif" evidence="1">
    <location>
        <begin position="26"/>
        <end position="46"/>
    </location>
</feature>
<feature type="active site" description="For autocatalytic cleavage activity" evidence="1">
    <location>
        <position position="159"/>
    </location>
</feature>
<feature type="active site" description="For autocatalytic cleavage activity" evidence="1">
    <location>
        <position position="197"/>
    </location>
</feature>
<feature type="site" description="Cleavage; by autolysis" evidence="1">
    <location>
        <begin position="123"/>
        <end position="124"/>
    </location>
</feature>
<comment type="function">
    <text evidence="1">Represses a number of genes involved in the response to DNA damage (SOS response), including recA and lexA. In the presence of single-stranded DNA, RecA interacts with LexA causing an autocatalytic cleavage which disrupts the DNA-binding part of LexA, leading to derepression of the SOS regulon and eventually DNA repair.</text>
</comment>
<comment type="catalytic activity">
    <reaction evidence="1">
        <text>Hydrolysis of Ala-|-Gly bond in repressor LexA.</text>
        <dbReference type="EC" id="3.4.21.88"/>
    </reaction>
</comment>
<comment type="subunit">
    <text evidence="1">Homodimer.</text>
</comment>
<comment type="similarity">
    <text evidence="1">Belongs to the peptidase S24 family.</text>
</comment>
<evidence type="ECO:0000255" key="1">
    <source>
        <dbReference type="HAMAP-Rule" id="MF_00015"/>
    </source>
</evidence>
<accession>P61613</accession>
<organism>
    <name type="scientific">Rhodobacter capsulatus</name>
    <name type="common">Rhodopseudomonas capsulata</name>
    <dbReference type="NCBI Taxonomy" id="1061"/>
    <lineage>
        <taxon>Bacteria</taxon>
        <taxon>Pseudomonadati</taxon>
        <taxon>Pseudomonadota</taxon>
        <taxon>Alphaproteobacteria</taxon>
        <taxon>Rhodobacterales</taxon>
        <taxon>Rhodobacter group</taxon>
        <taxon>Rhodobacter</taxon>
    </lineage>
</organism>
<protein>
    <recommendedName>
        <fullName evidence="1">LexA repressor</fullName>
        <ecNumber evidence="1">3.4.21.88</ecNumber>
    </recommendedName>
</protein>
<sequence>MLTHKQLELLDFIQKRMARDGVPPSFDEMKDALDLRSKSGIHRLITALEERGFIRRMAHRARALEIVKLPESMERAAEAERGLQTQPAFTPMLIAGSRTEPPRGALPVAAAALDIPMMGRIAAGVPIEAIAEVAHHVTVPGAMLSGRGEHYALEVKGDSMIQAGINDGDIVVIRSQPTAENGDIVVALVEDLEATLKRYYRRGGMIALEAANPAYETRLLREDQVKVQGRLVGLIRSY</sequence>